<evidence type="ECO:0000255" key="1">
    <source>
        <dbReference type="HAMAP-Rule" id="MF_01384"/>
    </source>
</evidence>
<gene>
    <name evidence="1" type="primary">ureD</name>
    <name type="ordered locus">PMM0966</name>
</gene>
<protein>
    <recommendedName>
        <fullName evidence="1">Urease accessory protein UreD</fullName>
    </recommendedName>
</protein>
<comment type="function">
    <text evidence="1">Required for maturation of urease via the functional incorporation of the urease nickel metallocenter.</text>
</comment>
<comment type="subunit">
    <text evidence="1">UreD, UreF and UreG form a complex that acts as a GTP-hydrolysis-dependent molecular chaperone, activating the urease apoprotein by helping to assemble the nickel containing metallocenter of UreC. The UreE protein probably delivers the nickel.</text>
</comment>
<comment type="subcellular location">
    <subcellularLocation>
        <location evidence="1">Cytoplasm</location>
    </subcellularLocation>
</comment>
<comment type="similarity">
    <text evidence="1">Belongs to the UreD family.</text>
</comment>
<keyword id="KW-0143">Chaperone</keyword>
<keyword id="KW-0963">Cytoplasm</keyword>
<keyword id="KW-0996">Nickel insertion</keyword>
<dbReference type="EMBL" id="BX548174">
    <property type="protein sequence ID" value="CAE19425.1"/>
    <property type="molecule type" value="Genomic_DNA"/>
</dbReference>
<dbReference type="RefSeq" id="WP_011132599.1">
    <property type="nucleotide sequence ID" value="NC_005072.1"/>
</dbReference>
<dbReference type="SMR" id="Q7V1B3"/>
<dbReference type="STRING" id="59919.PMM0966"/>
<dbReference type="KEGG" id="pmm:PMM0966"/>
<dbReference type="eggNOG" id="COG0829">
    <property type="taxonomic scope" value="Bacteria"/>
</dbReference>
<dbReference type="HOGENOM" id="CLU_056339_4_0_3"/>
<dbReference type="OrthoDB" id="9798842at2"/>
<dbReference type="Proteomes" id="UP000001026">
    <property type="component" value="Chromosome"/>
</dbReference>
<dbReference type="GO" id="GO:0005737">
    <property type="term" value="C:cytoplasm"/>
    <property type="evidence" value="ECO:0007669"/>
    <property type="project" value="UniProtKB-SubCell"/>
</dbReference>
<dbReference type="GO" id="GO:0016151">
    <property type="term" value="F:nickel cation binding"/>
    <property type="evidence" value="ECO:0007669"/>
    <property type="project" value="UniProtKB-UniRule"/>
</dbReference>
<dbReference type="HAMAP" id="MF_01384">
    <property type="entry name" value="UreD"/>
    <property type="match status" value="1"/>
</dbReference>
<dbReference type="InterPro" id="IPR002669">
    <property type="entry name" value="UreD"/>
</dbReference>
<dbReference type="PANTHER" id="PTHR33643">
    <property type="entry name" value="UREASE ACCESSORY PROTEIN D"/>
    <property type="match status" value="1"/>
</dbReference>
<dbReference type="PANTHER" id="PTHR33643:SF1">
    <property type="entry name" value="UREASE ACCESSORY PROTEIN D"/>
    <property type="match status" value="1"/>
</dbReference>
<dbReference type="Pfam" id="PF01774">
    <property type="entry name" value="UreD"/>
    <property type="match status" value="1"/>
</dbReference>
<feature type="chain" id="PRO_0000340480" description="Urease accessory protein UreD">
    <location>
        <begin position="1"/>
        <end position="297"/>
    </location>
</feature>
<accession>Q7V1B3</accession>
<name>URED_PROMP</name>
<proteinExistence type="inferred from homology"/>
<organism>
    <name type="scientific">Prochlorococcus marinus subsp. pastoris (strain CCMP1986 / NIES-2087 / MED4)</name>
    <dbReference type="NCBI Taxonomy" id="59919"/>
    <lineage>
        <taxon>Bacteria</taxon>
        <taxon>Bacillati</taxon>
        <taxon>Cyanobacteriota</taxon>
        <taxon>Cyanophyceae</taxon>
        <taxon>Synechococcales</taxon>
        <taxon>Prochlorococcaceae</taxon>
        <taxon>Prochlorococcus</taxon>
    </lineage>
</organism>
<reference key="1">
    <citation type="journal article" date="2003" name="Nature">
        <title>Genome divergence in two Prochlorococcus ecotypes reflects oceanic niche differentiation.</title>
        <authorList>
            <person name="Rocap G."/>
            <person name="Larimer F.W."/>
            <person name="Lamerdin J.E."/>
            <person name="Malfatti S."/>
            <person name="Chain P."/>
            <person name="Ahlgren N.A."/>
            <person name="Arellano A."/>
            <person name="Coleman M."/>
            <person name="Hauser L."/>
            <person name="Hess W.R."/>
            <person name="Johnson Z.I."/>
            <person name="Land M.L."/>
            <person name="Lindell D."/>
            <person name="Post A.F."/>
            <person name="Regala W."/>
            <person name="Shah M."/>
            <person name="Shaw S.L."/>
            <person name="Steglich C."/>
            <person name="Sullivan M.B."/>
            <person name="Ting C.S."/>
            <person name="Tolonen A."/>
            <person name="Webb E.A."/>
            <person name="Zinser E.R."/>
            <person name="Chisholm S.W."/>
        </authorList>
    </citation>
    <scope>NUCLEOTIDE SEQUENCE [LARGE SCALE GENOMIC DNA]</scope>
    <source>
        <strain>CCMP1986 / NIES-2087 / MED4</strain>
    </source>
</reference>
<sequence>MAKSSWEGNCFLNFFNNKSSSGKDDKTIFKSKFTSPYKLLKCSYDQEGRCILPILHTAGGLVGGDLLEFEANIGINSKVLLTTSSAQKVYGSVGRSKINPEGTFSSQKTKISILDNSHLEYLPQETIVFANGLYSQEFNIKISDNSSFLFTDLIRLGRSSAGESIESGVFRSKLEIMRNGNLCDDWEFVDQIELTKFSFEAKSGMDFKPVFGSLIWICEKEFPITKISYLKEKIKIIFKENNNYLSLGTLENGLSIRFLGTSSQDARKCFFSIWTQIRTVCGFCKPEYQGVWPLQDL</sequence>